<proteinExistence type="evidence at protein level"/>
<accession>Q8BR76</accession>
<accession>Q78U07</accession>
<sequence length="992" mass="111810">MVTRTRPVAAMAVRSRSSSRTGTAYLLLVLCEVSWAQIFSFPFRRPETCDFNQYFDISALSCAPCGANQRRDALGTSCVCLPGYHMISNNGGPSIICKKCPENMKGVTKDGWDCISCPSGLTAEGKCHCPTGHILVERNVSGSLLAQATCELCDESENSFTKANALGTRCVRCEPTFVNTSRSCSCSEPHTLTGGLCFSNTGNFHQRVISTARYGELGMSLNSEWFAKYLQATAAACWTHANLTSCQALGNMCVMNMNSYDSTTLDACRLFHYIFESTAGLISVHSVPFWRQNLPWLFYGDQPGLAPQVLSTTPLPTNFSFKGQNQLKFVAASYDIRGNFIKWQPLEGGVLQLCPDTERRLDAAYAFGTTYQQNCEISLSKLLVDFSSPVFYDVYLEYTDEEQHRYLWPIPVLNLNLQHNKLFVNQDSSSSKWLLTRRIFLVDAVSGRENDLGNQPRVIRVATQISLSIRLVPNTKNGNIYTPLLTIAYSDIDIKNAHSQSAKISFSVKYEMNQGDASVHTDIALGVLGGLAVLSSLLKTAGWKRRVGSPMIDLQTVMKFLLYYAGDLANVFFIITVGTGLYWLIFFKAQKSVSVLLPMPVQEERFVTYVGCAFAMKALQFLHKFISQISIDIFFIDWERPKGKVLKAVEGEGGVRSATVPVSIWRTYFVANEWNEIQTVRKINPLFQVLTTLFFLEVVGFKNLALMDSSSSLSRNPSDYTAPYSRILRYAVATAIWLVIGIIQVVFFAAFYERFIEDKIRQFVDLCSMSNVSVFLLSHRCFGYYIHGRSVHGHADTNMEEMNMNLKREAENLCSQRGLVPNTDGQTFQIAVSSQMRQHYDRIHETLTRRNGPARLLSSSGSTFEQSIKAYHAMNKFLGSFIDHVHKEMDYFIKDKLLLERILGMEFMEPMEKSIFYNDEGHSFSSVLYYGNEATLLIFDLLFFCVVDLACQDFVLASFLTYLQQEIFRFIRNTVGQKNLATKTLVDERFLI</sequence>
<feature type="signal peptide" evidence="2">
    <location>
        <begin position="1"/>
        <end position="36"/>
    </location>
</feature>
<feature type="chain" id="PRO_0000225690" description="Meckelin" evidence="2">
    <location>
        <begin position="37"/>
        <end position="992"/>
    </location>
</feature>
<feature type="topological domain" description="Extracellular" evidence="1">
    <location>
        <begin position="37"/>
        <end position="516"/>
    </location>
</feature>
<feature type="transmembrane region" description="Helical; Name=1" evidence="1">
    <location>
        <begin position="517"/>
        <end position="545"/>
    </location>
</feature>
<feature type="topological domain" description="Cytoplasmic" evidence="1">
    <location>
        <begin position="546"/>
        <end position="555"/>
    </location>
</feature>
<feature type="transmembrane region" description="Helical; Name=2" evidence="1">
    <location>
        <begin position="556"/>
        <end position="587"/>
    </location>
</feature>
<feature type="topological domain" description="Extracellular" evidence="1">
    <location>
        <begin position="588"/>
        <end position="600"/>
    </location>
</feature>
<feature type="transmembrane region" description="Helical; Name=3" evidence="1">
    <location>
        <begin position="601"/>
        <end position="628"/>
    </location>
</feature>
<feature type="topological domain" description="Cytoplasmic" evidence="1">
    <location>
        <begin position="629"/>
        <end position="667"/>
    </location>
</feature>
<feature type="transmembrane region" description="Discontinuously helical; Name=4" evidence="1">
    <location>
        <begin position="668"/>
        <end position="698"/>
    </location>
</feature>
<feature type="intramembrane region" description="Helical; Name=4A" evidence="1">
    <location>
        <begin position="668"/>
        <end position="676"/>
    </location>
</feature>
<feature type="intramembrane region" evidence="1">
    <location>
        <begin position="677"/>
        <end position="685"/>
    </location>
</feature>
<feature type="intramembrane region" description="Helical; Name=4B" evidence="1">
    <location>
        <begin position="686"/>
        <end position="698"/>
    </location>
</feature>
<feature type="topological domain" description="Extracellular" evidence="1">
    <location>
        <begin position="699"/>
        <end position="728"/>
    </location>
</feature>
<feature type="transmembrane region" description="Discontinuously helical; Name=5" evidence="1">
    <location>
        <begin position="729"/>
        <end position="768"/>
    </location>
</feature>
<feature type="intramembrane region" description="Helical; Name=5A" evidence="1">
    <location>
        <begin position="729"/>
        <end position="754"/>
    </location>
</feature>
<feature type="intramembrane region" evidence="1">
    <location>
        <begin position="755"/>
        <end position="759"/>
    </location>
</feature>
<feature type="intramembrane region" description="Helical; Name=5B" evidence="1">
    <location>
        <begin position="760"/>
        <end position="768"/>
    </location>
</feature>
<feature type="topological domain" description="Cytoplasmic" evidence="1">
    <location>
        <begin position="769"/>
        <end position="923"/>
    </location>
</feature>
<feature type="transmembrane region" description="Discontinuously helical; Name=6" evidence="1">
    <location>
        <begin position="924"/>
        <end position="949"/>
    </location>
</feature>
<feature type="intramembrane region" description="Helical; Name=6A" evidence="1">
    <location>
        <begin position="924"/>
        <end position="926"/>
    </location>
</feature>
<feature type="intramembrane region" evidence="1">
    <location>
        <begin position="927"/>
        <end position="933"/>
    </location>
</feature>
<feature type="intramembrane region" description="Helical; Name=6B" evidence="1">
    <location>
        <begin position="934"/>
        <end position="949"/>
    </location>
</feature>
<feature type="topological domain" description="Extracellular" evidence="1">
    <location>
        <begin position="950"/>
        <end position="954"/>
    </location>
</feature>
<feature type="transmembrane region" description="Helical; Name=7" evidence="1">
    <location>
        <begin position="955"/>
        <end position="982"/>
    </location>
</feature>
<feature type="topological domain" description="Cytoplasmic" evidence="1">
    <location>
        <begin position="983"/>
        <end position="992"/>
    </location>
</feature>
<feature type="region of interest" description="Cysteine-rich" evidence="1">
    <location>
        <begin position="37"/>
        <end position="280"/>
    </location>
</feature>
<feature type="glycosylation site" description="N-linked (GlcNAc...) asparagine" evidence="2">
    <location>
        <position position="242"/>
    </location>
</feature>
<feature type="disulfide bond" evidence="1">
    <location>
        <begin position="49"/>
        <end position="62"/>
    </location>
</feature>
<feature type="disulfide bond" evidence="1">
    <location>
        <begin position="65"/>
        <end position="78"/>
    </location>
</feature>
<feature type="disulfide bond" evidence="1">
    <location>
        <begin position="80"/>
        <end position="97"/>
    </location>
</feature>
<feature type="disulfide bond" evidence="1">
    <location>
        <begin position="100"/>
        <end position="114"/>
    </location>
</feature>
<feature type="disulfide bond" evidence="1">
    <location>
        <begin position="117"/>
        <end position="127"/>
    </location>
</feature>
<feature type="disulfide bond" evidence="1">
    <location>
        <begin position="129"/>
        <end position="150"/>
    </location>
</feature>
<feature type="disulfide bond" evidence="1">
    <location>
        <begin position="153"/>
        <end position="170"/>
    </location>
</feature>
<feature type="disulfide bond" evidence="1">
    <location>
        <begin position="173"/>
        <end position="184"/>
    </location>
</feature>
<feature type="disulfide bond" evidence="1">
    <location>
        <begin position="186"/>
        <end position="197"/>
    </location>
</feature>
<feature type="disulfide bond" evidence="1">
    <location>
        <begin position="237"/>
        <end position="246"/>
    </location>
</feature>
<feature type="disulfide bond" evidence="1">
    <location>
        <begin position="253"/>
        <end position="268"/>
    </location>
</feature>
<feature type="disulfide bond" evidence="1">
    <location>
        <begin position="354"/>
        <end position="375"/>
    </location>
</feature>
<feature type="splice variant" id="VSP_017417" description="In isoform 2." evidence="9">
    <original>VERNVSGSLLAQATCELCDESENSFTKAN</original>
    <variation>GKNNIYKIMVMNFCVYFIKDINLNGFVVV</variation>
    <location>
        <begin position="136"/>
        <end position="164"/>
    </location>
</feature>
<feature type="splice variant" id="VSP_017418" description="In isoform 2." evidence="9">
    <location>
        <begin position="165"/>
        <end position="992"/>
    </location>
</feature>
<reference key="1">
    <citation type="journal article" date="2005" name="Science">
        <title>The transcriptional landscape of the mammalian genome.</title>
        <authorList>
            <person name="Carninci P."/>
            <person name="Kasukawa T."/>
            <person name="Katayama S."/>
            <person name="Gough J."/>
            <person name="Frith M.C."/>
            <person name="Maeda N."/>
            <person name="Oyama R."/>
            <person name="Ravasi T."/>
            <person name="Lenhard B."/>
            <person name="Wells C."/>
            <person name="Kodzius R."/>
            <person name="Shimokawa K."/>
            <person name="Bajic V.B."/>
            <person name="Brenner S.E."/>
            <person name="Batalov S."/>
            <person name="Forrest A.R."/>
            <person name="Zavolan M."/>
            <person name="Davis M.J."/>
            <person name="Wilming L.G."/>
            <person name="Aidinis V."/>
            <person name="Allen J.E."/>
            <person name="Ambesi-Impiombato A."/>
            <person name="Apweiler R."/>
            <person name="Aturaliya R.N."/>
            <person name="Bailey T.L."/>
            <person name="Bansal M."/>
            <person name="Baxter L."/>
            <person name="Beisel K.W."/>
            <person name="Bersano T."/>
            <person name="Bono H."/>
            <person name="Chalk A.M."/>
            <person name="Chiu K.P."/>
            <person name="Choudhary V."/>
            <person name="Christoffels A."/>
            <person name="Clutterbuck D.R."/>
            <person name="Crowe M.L."/>
            <person name="Dalla E."/>
            <person name="Dalrymple B.P."/>
            <person name="de Bono B."/>
            <person name="Della Gatta G."/>
            <person name="di Bernardo D."/>
            <person name="Down T."/>
            <person name="Engstrom P."/>
            <person name="Fagiolini M."/>
            <person name="Faulkner G."/>
            <person name="Fletcher C.F."/>
            <person name="Fukushima T."/>
            <person name="Furuno M."/>
            <person name="Futaki S."/>
            <person name="Gariboldi M."/>
            <person name="Georgii-Hemming P."/>
            <person name="Gingeras T.R."/>
            <person name="Gojobori T."/>
            <person name="Green R.E."/>
            <person name="Gustincich S."/>
            <person name="Harbers M."/>
            <person name="Hayashi Y."/>
            <person name="Hensch T.K."/>
            <person name="Hirokawa N."/>
            <person name="Hill D."/>
            <person name="Huminiecki L."/>
            <person name="Iacono M."/>
            <person name="Ikeo K."/>
            <person name="Iwama A."/>
            <person name="Ishikawa T."/>
            <person name="Jakt M."/>
            <person name="Kanapin A."/>
            <person name="Katoh M."/>
            <person name="Kawasawa Y."/>
            <person name="Kelso J."/>
            <person name="Kitamura H."/>
            <person name="Kitano H."/>
            <person name="Kollias G."/>
            <person name="Krishnan S.P."/>
            <person name="Kruger A."/>
            <person name="Kummerfeld S.K."/>
            <person name="Kurochkin I.V."/>
            <person name="Lareau L.F."/>
            <person name="Lazarevic D."/>
            <person name="Lipovich L."/>
            <person name="Liu J."/>
            <person name="Liuni S."/>
            <person name="McWilliam S."/>
            <person name="Madan Babu M."/>
            <person name="Madera M."/>
            <person name="Marchionni L."/>
            <person name="Matsuda H."/>
            <person name="Matsuzawa S."/>
            <person name="Miki H."/>
            <person name="Mignone F."/>
            <person name="Miyake S."/>
            <person name="Morris K."/>
            <person name="Mottagui-Tabar S."/>
            <person name="Mulder N."/>
            <person name="Nakano N."/>
            <person name="Nakauchi H."/>
            <person name="Ng P."/>
            <person name="Nilsson R."/>
            <person name="Nishiguchi S."/>
            <person name="Nishikawa S."/>
            <person name="Nori F."/>
            <person name="Ohara O."/>
            <person name="Okazaki Y."/>
            <person name="Orlando V."/>
            <person name="Pang K.C."/>
            <person name="Pavan W.J."/>
            <person name="Pavesi G."/>
            <person name="Pesole G."/>
            <person name="Petrovsky N."/>
            <person name="Piazza S."/>
            <person name="Reed J."/>
            <person name="Reid J.F."/>
            <person name="Ring B.Z."/>
            <person name="Ringwald M."/>
            <person name="Rost B."/>
            <person name="Ruan Y."/>
            <person name="Salzberg S.L."/>
            <person name="Sandelin A."/>
            <person name="Schneider C."/>
            <person name="Schoenbach C."/>
            <person name="Sekiguchi K."/>
            <person name="Semple C.A."/>
            <person name="Seno S."/>
            <person name="Sessa L."/>
            <person name="Sheng Y."/>
            <person name="Shibata Y."/>
            <person name="Shimada H."/>
            <person name="Shimada K."/>
            <person name="Silva D."/>
            <person name="Sinclair B."/>
            <person name="Sperling S."/>
            <person name="Stupka E."/>
            <person name="Sugiura K."/>
            <person name="Sultana R."/>
            <person name="Takenaka Y."/>
            <person name="Taki K."/>
            <person name="Tammoja K."/>
            <person name="Tan S.L."/>
            <person name="Tang S."/>
            <person name="Taylor M.S."/>
            <person name="Tegner J."/>
            <person name="Teichmann S.A."/>
            <person name="Ueda H.R."/>
            <person name="van Nimwegen E."/>
            <person name="Verardo R."/>
            <person name="Wei C.L."/>
            <person name="Yagi K."/>
            <person name="Yamanishi H."/>
            <person name="Zabarovsky E."/>
            <person name="Zhu S."/>
            <person name="Zimmer A."/>
            <person name="Hide W."/>
            <person name="Bult C."/>
            <person name="Grimmond S.M."/>
            <person name="Teasdale R.D."/>
            <person name="Liu E.T."/>
            <person name="Brusic V."/>
            <person name="Quackenbush J."/>
            <person name="Wahlestedt C."/>
            <person name="Mattick J.S."/>
            <person name="Hume D.A."/>
            <person name="Kai C."/>
            <person name="Sasaki D."/>
            <person name="Tomaru Y."/>
            <person name="Fukuda S."/>
            <person name="Kanamori-Katayama M."/>
            <person name="Suzuki M."/>
            <person name="Aoki J."/>
            <person name="Arakawa T."/>
            <person name="Iida J."/>
            <person name="Imamura K."/>
            <person name="Itoh M."/>
            <person name="Kato T."/>
            <person name="Kawaji H."/>
            <person name="Kawagashira N."/>
            <person name="Kawashima T."/>
            <person name="Kojima M."/>
            <person name="Kondo S."/>
            <person name="Konno H."/>
            <person name="Nakano K."/>
            <person name="Ninomiya N."/>
            <person name="Nishio T."/>
            <person name="Okada M."/>
            <person name="Plessy C."/>
            <person name="Shibata K."/>
            <person name="Shiraki T."/>
            <person name="Suzuki S."/>
            <person name="Tagami M."/>
            <person name="Waki K."/>
            <person name="Watahiki A."/>
            <person name="Okamura-Oho Y."/>
            <person name="Suzuki H."/>
            <person name="Kawai J."/>
            <person name="Hayashizaki Y."/>
        </authorList>
    </citation>
    <scope>NUCLEOTIDE SEQUENCE [LARGE SCALE MRNA] (ISOFORM 1)</scope>
    <scope>NUCLEOTIDE SEQUENCE [LARGE SCALE MRNA] OF 6-995 (ISOFORM 2)</scope>
    <source>
        <strain>C57BL/6J</strain>
        <tissue>Cerebellum</tissue>
        <tissue>Corpora quadrigemina</tissue>
    </source>
</reference>
<reference key="2">
    <citation type="journal article" date="2007" name="Hum. Mol. Genet.">
        <title>The Meckel-Gruber syndrome proteins MKS1 and meckelin interact and are required for primary cilium formation.</title>
        <authorList>
            <person name="Dawe H.R."/>
            <person name="Smith U.M."/>
            <person name="Cullinane A.R."/>
            <person name="Gerrelli D."/>
            <person name="Cox P."/>
            <person name="Badano J.L."/>
            <person name="Blair-Reid S."/>
            <person name="Sriram N."/>
            <person name="Katsanis N."/>
            <person name="Attie-Bitach T."/>
            <person name="Afford S.C."/>
            <person name="Copp A.J."/>
            <person name="Kelly D.A."/>
            <person name="Gull K."/>
            <person name="Johnson C.A."/>
        </authorList>
    </citation>
    <scope>FUNCTION</scope>
</reference>
<reference key="3">
    <citation type="journal article" date="2009" name="J. Am. Soc. Nephrol.">
        <title>A mouse model for Meckel syndrome type 3.</title>
        <authorList>
            <person name="Cook S.A."/>
            <person name="Collin G.B."/>
            <person name="Bronson R.T."/>
            <person name="Naggert J.K."/>
            <person name="Liu D.P."/>
            <person name="Akeson E.C."/>
            <person name="Davisson M.T."/>
        </authorList>
    </citation>
    <scope>INVOLVEMENT IN BPCK PHENOTYPE</scope>
</reference>
<reference key="4">
    <citation type="journal article" date="2009" name="J. Biol. Chem.">
        <title>Meckel-Gruber syndrome protein MKS3 is required for endoplasmic reticulum-associated degradation of surfactant protein C.</title>
        <authorList>
            <person name="Wang M."/>
            <person name="Bridges J.P."/>
            <person name="Na C.L."/>
            <person name="Xu Y."/>
            <person name="Weaver T.E."/>
        </authorList>
    </citation>
    <scope>SUBCELLULAR LOCATION</scope>
</reference>
<reference key="5">
    <citation type="journal article" date="2009" name="Hum. Mol. Genet.">
        <title>Ciliary and centrosomal defects associated with mutation and depletion of the Meckel syndrome genes MKS1 and MKS3.</title>
        <authorList>
            <person name="Tammachote R."/>
            <person name="Hommerding C.J."/>
            <person name="Sinders R.M."/>
            <person name="Miller C.A."/>
            <person name="Czarnecki P.G."/>
            <person name="Leightner A.C."/>
            <person name="Salisbury J.L."/>
            <person name="Ward C.J."/>
            <person name="Torres V.E."/>
            <person name="Gattone V.H. II"/>
            <person name="Harris P.C."/>
        </authorList>
    </citation>
    <scope>FUNCTION</scope>
</reference>
<reference key="6">
    <citation type="journal article" date="2011" name="Nat. Genet.">
        <title>A transition zone complex regulates mammalian ciliogenesis and ciliary membrane composition.</title>
        <authorList>
            <person name="Garcia-Gonzalo F.R."/>
            <person name="Corbit K.C."/>
            <person name="Sirerol-Piquer M.S."/>
            <person name="Ramaswami G."/>
            <person name="Otto E.A."/>
            <person name="Noriega T.R."/>
            <person name="Seol A.D."/>
            <person name="Robinson J.F."/>
            <person name="Bennett C.L."/>
            <person name="Josifova D.J."/>
            <person name="Garcia-Verdugo J.M."/>
            <person name="Katsanis N."/>
            <person name="Hildebrandt F."/>
            <person name="Reiter J.F."/>
        </authorList>
    </citation>
    <scope>FUNCTION</scope>
    <scope>DISRUPTION PHENOTYPE</scope>
    <scope>SUBCELLULAR LOCATION</scope>
    <scope>IDENTIFICATION IN THE TECTONIC-LIKE COMPLEX</scope>
</reference>
<reference key="7">
    <citation type="journal article" date="2013" name="Hum. Mol. Genet.">
        <title>The Meckel syndrome protein meckelin (TMEM67) is a key regulator of cilia function but is not required for tissue planar polarity.</title>
        <authorList>
            <person name="Leightner A.C."/>
            <person name="Hommerding C.J."/>
            <person name="Peng Y."/>
            <person name="Salisbury J.L."/>
            <person name="Gainullin V.G."/>
            <person name="Czarnecki P.G."/>
            <person name="Sussman C.R."/>
            <person name="Harris P.C."/>
        </authorList>
    </citation>
    <scope>INVOLVEMENT IN BPCK PHENOTYPE</scope>
</reference>
<reference key="8">
    <citation type="journal article" date="2015" name="Dis. Model. Mech.">
        <title>The Meckel-Gruber syndrome protein TMEM67 controls basal body positioning and epithelial branching morphogenesis in mice via the non-canonical Wnt pathway.</title>
        <authorList>
            <person name="Abdelhamed Z.A."/>
            <person name="Natarajan S."/>
            <person name="Wheway G."/>
            <person name="Inglehearn C.F."/>
            <person name="Toomes C."/>
            <person name="Johnson C.A."/>
            <person name="Jagger D.J."/>
        </authorList>
    </citation>
    <scope>FUNCTION</scope>
    <scope>DISRUPTION PHENOTYPE</scope>
</reference>
<gene>
    <name type="primary">Tmem67</name>
    <name type="synonym">Mks3</name>
</gene>
<protein>
    <recommendedName>
        <fullName>Meckelin</fullName>
    </recommendedName>
    <alternativeName>
        <fullName>Meckel syndrome type 3 protein homolog</fullName>
    </alternativeName>
    <alternativeName>
        <fullName>Transmembrane protein 67</fullName>
    </alternativeName>
</protein>
<comment type="function">
    <text evidence="3 5 6 8">Part of the tectonic-like complex which is required for tissue-specific ciliogenesis and may regulate ciliary membrane composition. Involved in centrosome migration to the apical cell surface during early ciliogenesis. Required for ciliary structure and function, including a role in regulating length and appropriate number through modulating centrosome duplication. Is a key regulator of stereociliary bundle orientation (PubMed:26035863). Required for epithelial cell branching morphology (PubMed:26035863). Essential for endoplasmic reticulum-associated degradation (ERAD) of surfactant protein C (sftpc). Involved in the negative regulation of canonical Wnt signaling, and activation of the non-canonical cascade stimulated by WNT5A (PubMed:26035863). In non-canonical Wnt signaling, it may act as ROR2 coreceptor (PubMed:26035863).</text>
</comment>
<comment type="subunit">
    <text evidence="1 6">Homodimer (By similarity). Part of the tectonic-like complex (also named B9 complex) (PubMed:21725307). Interacts with DNAJB9, DNAJC10 and mutated SFTPC (By similarity). Interacts with SYNE2 during the early establishment of cell polarity (By similarity). Interacts (via C-terminus) with FLNA (By similarity). Interacts with TMEM218 (By similarity). Interacts with WNT5A (By similarity). Interacts with ROR2 (By similarity).</text>
</comment>
<comment type="subcellular location">
    <subcellularLocation>
        <location evidence="10">Cell membrane</location>
        <topology evidence="10">Multi-pass membrane protein</topology>
    </subcellularLocation>
    <subcellularLocation>
        <location>Endoplasmic reticulum membrane</location>
        <topology>Multi-pass membrane protein</topology>
    </subcellularLocation>
    <subcellularLocation>
        <location>Cytoplasm</location>
        <location>Cytoskeleton</location>
        <location>Cilium basal body</location>
    </subcellularLocation>
    <text>Localizes at the transition zone, a region between the basal body and the ciliary axoneme.</text>
</comment>
<comment type="alternative products">
    <event type="alternative splicing"/>
    <isoform>
        <id>Q8BR76-1</id>
        <name>1</name>
        <sequence type="displayed"/>
    </isoform>
    <isoform>
        <id>Q8BR76-2</id>
        <name>2</name>
        <sequence type="described" ref="VSP_017417 VSP_017418"/>
    </isoform>
</comment>
<comment type="disease">
    <text evidence="4 7">A spontaneous deletion of TMEM67 cause the bilateral polycystic kidneys (bpck) phenotype, a disease mimicking human Meckel-Gruber syndrome 3. Homozygous bpck/bpck mice typically manifest bilateral nephropathy with swollen abdomens resulting from grossly enlarged polycystic kidneys and die by 3 week of age. Some mice also develop hydrocephalus, usually detectable within a few days of birth (PubMed:19211713). Additionally, bpck/bpck mice exhibit retinal degeneration and tissue disorganization in the eye, and cochlear defects (PubMed:23393159).</text>
</comment>
<comment type="disruption phenotype">
    <text evidence="6 8">Knockout mice die soon after birth. They show multi-organ developmental abnormalities including pulmonary hypoplasia, ventricular septal defects, shortening of the body longitudinal axis, limb abnormalities, and cochlear hair cell stereociliary bundle orientation and basal body/kinocilium positioning defects (PubMed:26035863).</text>
</comment>
<comment type="sequence caution" evidence="10">
    <conflict type="erroneous initiation">
        <sequence resource="EMBL-CDS" id="BAC31378"/>
    </conflict>
    <text>Truncated N-terminus.</text>
</comment>
<comment type="sequence caution" evidence="10">
    <conflict type="erroneous initiation">
        <sequence resource="EMBL-CDS" id="BAC32362"/>
    </conflict>
    <text>Extended N-terminus.</text>
</comment>
<dbReference type="EMBL" id="AK042835">
    <property type="protein sequence ID" value="BAC31378.1"/>
    <property type="status" value="ALT_INIT"/>
    <property type="molecule type" value="mRNA"/>
</dbReference>
<dbReference type="EMBL" id="AK045429">
    <property type="protein sequence ID" value="BAC32362.1"/>
    <property type="status" value="ALT_INIT"/>
    <property type="molecule type" value="mRNA"/>
</dbReference>
<dbReference type="CCDS" id="CCDS17974.1">
    <molecule id="Q8BR76-1"/>
</dbReference>
<dbReference type="RefSeq" id="NP_808529.2">
    <property type="nucleotide sequence ID" value="NM_177861.4"/>
</dbReference>
<dbReference type="SMR" id="Q8BR76"/>
<dbReference type="CORUM" id="Q8BR76"/>
<dbReference type="FunCoup" id="Q8BR76">
    <property type="interactions" value="451"/>
</dbReference>
<dbReference type="STRING" id="10090.ENSMUSP00000052644"/>
<dbReference type="GlyConnect" id="2504">
    <property type="glycosylation" value="1 N-Linked glycan (1 site)"/>
</dbReference>
<dbReference type="GlyCosmos" id="Q8BR76">
    <property type="glycosylation" value="2 sites, 1 glycan"/>
</dbReference>
<dbReference type="GlyGen" id="Q8BR76">
    <property type="glycosylation" value="3 sites, 4 N-linked glycans (3 sites)"/>
</dbReference>
<dbReference type="iPTMnet" id="Q8BR76"/>
<dbReference type="PhosphoSitePlus" id="Q8BR76"/>
<dbReference type="PaxDb" id="10090-ENSMUSP00000103928"/>
<dbReference type="ProteomicsDB" id="295636">
    <molecule id="Q8BR76-1"/>
</dbReference>
<dbReference type="ProteomicsDB" id="295637">
    <molecule id="Q8BR76-2"/>
</dbReference>
<dbReference type="Pumba" id="Q8BR76"/>
<dbReference type="DNASU" id="329795"/>
<dbReference type="GeneID" id="329795"/>
<dbReference type="KEGG" id="mmu:329795"/>
<dbReference type="UCSC" id="uc008saj.1">
    <molecule id="Q8BR76-2"/>
    <property type="organism name" value="mouse"/>
</dbReference>
<dbReference type="AGR" id="MGI:1923928"/>
<dbReference type="CTD" id="91147"/>
<dbReference type="MGI" id="MGI:1923928">
    <property type="gene designation" value="Tmem67"/>
</dbReference>
<dbReference type="eggNOG" id="KOG4611">
    <property type="taxonomic scope" value="Eukaryota"/>
</dbReference>
<dbReference type="InParanoid" id="Q8BR76"/>
<dbReference type="OrthoDB" id="419138at2759"/>
<dbReference type="Reactome" id="R-MMU-5620912">
    <property type="pathway name" value="Anchoring of the basal body to the plasma membrane"/>
</dbReference>
<dbReference type="BioGRID-ORCS" id="329795">
    <property type="hits" value="2 hits in 78 CRISPR screens"/>
</dbReference>
<dbReference type="ChiTaRS" id="Tmem67">
    <property type="organism name" value="mouse"/>
</dbReference>
<dbReference type="PRO" id="PR:Q8BR76"/>
<dbReference type="Proteomes" id="UP000000589">
    <property type="component" value="Unplaced"/>
</dbReference>
<dbReference type="RNAct" id="Q8BR76">
    <property type="molecule type" value="protein"/>
</dbReference>
<dbReference type="GO" id="GO:0030659">
    <property type="term" value="C:cytoplasmic vesicle membrane"/>
    <property type="evidence" value="ECO:0000314"/>
    <property type="project" value="UniProtKB"/>
</dbReference>
<dbReference type="GO" id="GO:0005856">
    <property type="term" value="C:cytoskeleton"/>
    <property type="evidence" value="ECO:0007669"/>
    <property type="project" value="UniProtKB-KW"/>
</dbReference>
<dbReference type="GO" id="GO:0005789">
    <property type="term" value="C:endoplasmic reticulum membrane"/>
    <property type="evidence" value="ECO:0000314"/>
    <property type="project" value="UniProtKB"/>
</dbReference>
<dbReference type="GO" id="GO:0036038">
    <property type="term" value="C:MKS complex"/>
    <property type="evidence" value="ECO:0000314"/>
    <property type="project" value="UniProtKB"/>
</dbReference>
<dbReference type="GO" id="GO:0005886">
    <property type="term" value="C:plasma membrane"/>
    <property type="evidence" value="ECO:0007669"/>
    <property type="project" value="UniProtKB-SubCell"/>
</dbReference>
<dbReference type="GO" id="GO:0048754">
    <property type="term" value="P:branching morphogenesis of an epithelial tube"/>
    <property type="evidence" value="ECO:0000315"/>
    <property type="project" value="UniProtKB"/>
</dbReference>
<dbReference type="GO" id="GO:0060271">
    <property type="term" value="P:cilium assembly"/>
    <property type="evidence" value="ECO:0000315"/>
    <property type="project" value="UniProtKB"/>
</dbReference>
<dbReference type="GO" id="GO:0007368">
    <property type="term" value="P:determination of left/right symmetry"/>
    <property type="evidence" value="ECO:0000315"/>
    <property type="project" value="MGI"/>
</dbReference>
<dbReference type="GO" id="GO:0060441">
    <property type="term" value="P:epithelial tube branching involved in lung morphogenesis"/>
    <property type="evidence" value="ECO:0000315"/>
    <property type="project" value="UniProtKB"/>
</dbReference>
<dbReference type="GO" id="GO:0007507">
    <property type="term" value="P:heart development"/>
    <property type="evidence" value="ECO:0000315"/>
    <property type="project" value="MGI"/>
</dbReference>
<dbReference type="GO" id="GO:0001822">
    <property type="term" value="P:kidney development"/>
    <property type="evidence" value="ECO:0000315"/>
    <property type="project" value="MGI"/>
</dbReference>
<dbReference type="GO" id="GO:0010826">
    <property type="term" value="P:negative regulation of centrosome duplication"/>
    <property type="evidence" value="ECO:0000315"/>
    <property type="project" value="UniProtKB"/>
</dbReference>
<dbReference type="GO" id="GO:0035567">
    <property type="term" value="P:non-canonical Wnt signaling pathway"/>
    <property type="evidence" value="ECO:0000315"/>
    <property type="project" value="UniProtKB"/>
</dbReference>
<dbReference type="InterPro" id="IPR009030">
    <property type="entry name" value="Growth_fac_rcpt_cys_sf"/>
</dbReference>
<dbReference type="InterPro" id="IPR019170">
    <property type="entry name" value="Meckelin"/>
</dbReference>
<dbReference type="PANTHER" id="PTHR21274">
    <property type="entry name" value="MECKELIN"/>
    <property type="match status" value="1"/>
</dbReference>
<dbReference type="PANTHER" id="PTHR21274:SF2">
    <property type="entry name" value="MECKELIN"/>
    <property type="match status" value="1"/>
</dbReference>
<dbReference type="Pfam" id="PF09773">
    <property type="entry name" value="Meckelin"/>
    <property type="match status" value="1"/>
</dbReference>
<dbReference type="SUPFAM" id="SSF57184">
    <property type="entry name" value="Growth factor receptor domain"/>
    <property type="match status" value="1"/>
</dbReference>
<keyword id="KW-0025">Alternative splicing</keyword>
<keyword id="KW-1003">Cell membrane</keyword>
<keyword id="KW-0966">Cell projection</keyword>
<keyword id="KW-0969">Cilium</keyword>
<keyword id="KW-0970">Cilium biogenesis/degradation</keyword>
<keyword id="KW-0963">Cytoplasm</keyword>
<keyword id="KW-0206">Cytoskeleton</keyword>
<keyword id="KW-1015">Disulfide bond</keyword>
<keyword id="KW-0256">Endoplasmic reticulum</keyword>
<keyword id="KW-0325">Glycoprotein</keyword>
<keyword id="KW-0472">Membrane</keyword>
<keyword id="KW-1185">Reference proteome</keyword>
<keyword id="KW-0732">Signal</keyword>
<keyword id="KW-0812">Transmembrane</keyword>
<keyword id="KW-1133">Transmembrane helix</keyword>
<evidence type="ECO:0000250" key="1">
    <source>
        <dbReference type="UniProtKB" id="Q5HYA8"/>
    </source>
</evidence>
<evidence type="ECO:0000255" key="2"/>
<evidence type="ECO:0000269" key="3">
    <source>
    </source>
</evidence>
<evidence type="ECO:0000269" key="4">
    <source>
    </source>
</evidence>
<evidence type="ECO:0000269" key="5">
    <source>
    </source>
</evidence>
<evidence type="ECO:0000269" key="6">
    <source>
    </source>
</evidence>
<evidence type="ECO:0000269" key="7">
    <source>
    </source>
</evidence>
<evidence type="ECO:0000269" key="8">
    <source>
    </source>
</evidence>
<evidence type="ECO:0000303" key="9">
    <source>
    </source>
</evidence>
<evidence type="ECO:0000305" key="10"/>
<organism>
    <name type="scientific">Mus musculus</name>
    <name type="common">Mouse</name>
    <dbReference type="NCBI Taxonomy" id="10090"/>
    <lineage>
        <taxon>Eukaryota</taxon>
        <taxon>Metazoa</taxon>
        <taxon>Chordata</taxon>
        <taxon>Craniata</taxon>
        <taxon>Vertebrata</taxon>
        <taxon>Euteleostomi</taxon>
        <taxon>Mammalia</taxon>
        <taxon>Eutheria</taxon>
        <taxon>Euarchontoglires</taxon>
        <taxon>Glires</taxon>
        <taxon>Rodentia</taxon>
        <taxon>Myomorpha</taxon>
        <taxon>Muroidea</taxon>
        <taxon>Muridae</taxon>
        <taxon>Murinae</taxon>
        <taxon>Mus</taxon>
        <taxon>Mus</taxon>
    </lineage>
</organism>
<name>MKS3_MOUSE</name>